<protein>
    <recommendedName>
        <fullName evidence="1">Proteasome subunit beta</fullName>
        <ecNumber evidence="1">3.4.25.1</ecNumber>
    </recommendedName>
    <alternativeName>
        <fullName evidence="1">20S proteasome beta subunit</fullName>
    </alternativeName>
    <alternativeName>
        <fullName evidence="1">Proteasome core protein PsmB</fullName>
    </alternativeName>
</protein>
<keyword id="KW-0068">Autocatalytic cleavage</keyword>
<keyword id="KW-0963">Cytoplasm</keyword>
<keyword id="KW-0378">Hydrolase</keyword>
<keyword id="KW-0645">Protease</keyword>
<keyword id="KW-0647">Proteasome</keyword>
<keyword id="KW-1185">Reference proteome</keyword>
<keyword id="KW-0888">Threonine protease</keyword>
<keyword id="KW-0865">Zymogen</keyword>
<reference key="1">
    <citation type="journal article" date="2005" name="Genome Res.">
        <title>Living with two extremes: conclusions from the genome sequence of Natronomonas pharaonis.</title>
        <authorList>
            <person name="Falb M."/>
            <person name="Pfeiffer F."/>
            <person name="Palm P."/>
            <person name="Rodewald K."/>
            <person name="Hickmann V."/>
            <person name="Tittor J."/>
            <person name="Oesterhelt D."/>
        </authorList>
    </citation>
    <scope>NUCLEOTIDE SEQUENCE [LARGE SCALE GENOMIC DNA]</scope>
    <source>
        <strain>ATCC 35678 / DSM 2160 / CIP 103997 / JCM 8858 / NBRC 14720 / NCIMB 2260 / Gabara</strain>
    </source>
</reference>
<sequence>MRQPDSSLPRTGQDHTLSPYEPELGEVPSNDLSMADLDNVNKTGTTTIGISTAEGVVIATDMRASLGGRFVSNKNVQKVEQIHPSAALTLVGSVGGAQSFIRSLRAEVDLYEARRGEDISINALATLAGNFARGGPFFAINPILGGVDDEGHHVYSIDPAGGVMKDDYTVTGSGLTVAYGTLEREYEDDMTNEEAKRVAASGIKAAVERDTGSGNGVFLATVTDEDVEIKGHKDFDEVL</sequence>
<accession>Q3IPX1</accession>
<dbReference type="EC" id="3.4.25.1" evidence="1"/>
<dbReference type="EMBL" id="CR936257">
    <property type="protein sequence ID" value="CAI49827.1"/>
    <property type="molecule type" value="Genomic_DNA"/>
</dbReference>
<dbReference type="RefSeq" id="WP_011323447.1">
    <property type="nucleotide sequence ID" value="NC_007426.1"/>
</dbReference>
<dbReference type="SMR" id="Q3IPX1"/>
<dbReference type="STRING" id="348780.NP_3472A"/>
<dbReference type="MEROPS" id="T01.002"/>
<dbReference type="EnsemblBacteria" id="CAI49827">
    <property type="protein sequence ID" value="CAI49827"/>
    <property type="gene ID" value="NP_3472A"/>
</dbReference>
<dbReference type="GeneID" id="3703062"/>
<dbReference type="KEGG" id="nph:NP_3472A"/>
<dbReference type="eggNOG" id="arCOG00970">
    <property type="taxonomic scope" value="Archaea"/>
</dbReference>
<dbReference type="HOGENOM" id="CLU_035750_7_2_2"/>
<dbReference type="OrthoDB" id="6330at2157"/>
<dbReference type="Proteomes" id="UP000002698">
    <property type="component" value="Chromosome"/>
</dbReference>
<dbReference type="GO" id="GO:0005737">
    <property type="term" value="C:cytoplasm"/>
    <property type="evidence" value="ECO:0007669"/>
    <property type="project" value="UniProtKB-SubCell"/>
</dbReference>
<dbReference type="GO" id="GO:0019774">
    <property type="term" value="C:proteasome core complex, beta-subunit complex"/>
    <property type="evidence" value="ECO:0007669"/>
    <property type="project" value="UniProtKB-UniRule"/>
</dbReference>
<dbReference type="GO" id="GO:0004298">
    <property type="term" value="F:threonine-type endopeptidase activity"/>
    <property type="evidence" value="ECO:0007669"/>
    <property type="project" value="UniProtKB-UniRule"/>
</dbReference>
<dbReference type="GO" id="GO:0010498">
    <property type="term" value="P:proteasomal protein catabolic process"/>
    <property type="evidence" value="ECO:0007669"/>
    <property type="project" value="UniProtKB-UniRule"/>
</dbReference>
<dbReference type="Gene3D" id="3.60.20.10">
    <property type="entry name" value="Glutamine Phosphoribosylpyrophosphate, subunit 1, domain 1"/>
    <property type="match status" value="1"/>
</dbReference>
<dbReference type="HAMAP" id="MF_02113_A">
    <property type="entry name" value="Proteasome_B_A"/>
    <property type="match status" value="1"/>
</dbReference>
<dbReference type="InterPro" id="IPR029055">
    <property type="entry name" value="Ntn_hydrolases_N"/>
</dbReference>
<dbReference type="InterPro" id="IPR019983">
    <property type="entry name" value="Pept_T1A_Psome_bsu_arc"/>
</dbReference>
<dbReference type="InterPro" id="IPR000243">
    <property type="entry name" value="Pept_T1A_subB"/>
</dbReference>
<dbReference type="InterPro" id="IPR001353">
    <property type="entry name" value="Proteasome_sua/b"/>
</dbReference>
<dbReference type="InterPro" id="IPR023333">
    <property type="entry name" value="Proteasome_suB-type"/>
</dbReference>
<dbReference type="NCBIfam" id="TIGR03634">
    <property type="entry name" value="arc_protsome_B"/>
    <property type="match status" value="1"/>
</dbReference>
<dbReference type="PANTHER" id="PTHR32194:SF0">
    <property type="entry name" value="ATP-DEPENDENT PROTEASE SUBUNIT HSLV"/>
    <property type="match status" value="1"/>
</dbReference>
<dbReference type="PANTHER" id="PTHR32194">
    <property type="entry name" value="METALLOPROTEASE TLDD"/>
    <property type="match status" value="1"/>
</dbReference>
<dbReference type="Pfam" id="PF00227">
    <property type="entry name" value="Proteasome"/>
    <property type="match status" value="1"/>
</dbReference>
<dbReference type="PRINTS" id="PR00141">
    <property type="entry name" value="PROTEASOME"/>
</dbReference>
<dbReference type="SUPFAM" id="SSF56235">
    <property type="entry name" value="N-terminal nucleophile aminohydrolases (Ntn hydrolases)"/>
    <property type="match status" value="1"/>
</dbReference>
<dbReference type="PROSITE" id="PS51476">
    <property type="entry name" value="PROTEASOME_BETA_2"/>
    <property type="match status" value="1"/>
</dbReference>
<evidence type="ECO:0000255" key="1">
    <source>
        <dbReference type="HAMAP-Rule" id="MF_02113"/>
    </source>
</evidence>
<evidence type="ECO:0000256" key="2">
    <source>
        <dbReference type="SAM" id="MobiDB-lite"/>
    </source>
</evidence>
<organism>
    <name type="scientific">Natronomonas pharaonis (strain ATCC 35678 / DSM 2160 / CIP 103997 / JCM 8858 / NBRC 14720 / NCIMB 2260 / Gabara)</name>
    <name type="common">Halobacterium pharaonis</name>
    <dbReference type="NCBI Taxonomy" id="348780"/>
    <lineage>
        <taxon>Archaea</taxon>
        <taxon>Methanobacteriati</taxon>
        <taxon>Methanobacteriota</taxon>
        <taxon>Stenosarchaea group</taxon>
        <taxon>Halobacteria</taxon>
        <taxon>Halobacteriales</taxon>
        <taxon>Haloarculaceae</taxon>
        <taxon>Natronomonas</taxon>
    </lineage>
</organism>
<comment type="function">
    <text evidence="1">Component of the proteasome core, a large protease complex with broad specificity involved in protein degradation.</text>
</comment>
<comment type="catalytic activity">
    <reaction evidence="1">
        <text>Cleavage of peptide bonds with very broad specificity.</text>
        <dbReference type="EC" id="3.4.25.1"/>
    </reaction>
</comment>
<comment type="activity regulation">
    <text evidence="1">The formation of the proteasomal ATPase PAN-20S proteasome complex, via the docking of the C-termini of PAN into the intersubunit pockets in the alpha-rings, triggers opening of the gate for substrate entry. Interconversion between the open-gate and close-gate conformations leads to a dynamic regulation of the 20S proteasome proteolysis activity.</text>
</comment>
<comment type="subunit">
    <text evidence="1">The 20S proteasome core is composed of 14 alpha and 14 beta subunits that assemble into four stacked heptameric rings, resulting in a barrel-shaped structure. The two inner rings, each composed of seven catalytic beta subunits, are sandwiched by two outer rings, each composed of seven alpha subunits. The catalytic chamber with the active sites is on the inside of the barrel. Has a gated structure, the ends of the cylinder being occluded by the N-termini of the alpha-subunits. Is capped at one or both ends by the proteasome regulatory ATPase, PAN.</text>
</comment>
<comment type="subcellular location">
    <subcellularLocation>
        <location evidence="1">Cytoplasm</location>
    </subcellularLocation>
</comment>
<comment type="similarity">
    <text evidence="1">Belongs to the peptidase T1B family.</text>
</comment>
<name>PSB_NATPD</name>
<feature type="propeptide" id="PRO_0000397384" description="Removed in mature form; by autocatalysis" evidence="1">
    <location>
        <begin position="1"/>
        <end position="44"/>
    </location>
</feature>
<feature type="chain" id="PRO_0000397385" description="Proteasome subunit beta">
    <location>
        <begin position="45"/>
        <end position="239"/>
    </location>
</feature>
<feature type="region of interest" description="Disordered" evidence="2">
    <location>
        <begin position="1"/>
        <end position="32"/>
    </location>
</feature>
<feature type="compositionally biased region" description="Polar residues" evidence="2">
    <location>
        <begin position="1"/>
        <end position="16"/>
    </location>
</feature>
<feature type="active site" description="Nucleophile" evidence="1">
    <location>
        <position position="45"/>
    </location>
</feature>
<gene>
    <name evidence="1" type="primary">psmB</name>
    <name type="ordered locus">NP_3472A</name>
</gene>
<proteinExistence type="inferred from homology"/>